<keyword id="KW-0488">Methylation</keyword>
<keyword id="KW-0687">Ribonucleoprotein</keyword>
<keyword id="KW-0689">Ribosomal protein</keyword>
<keyword id="KW-0694">RNA-binding</keyword>
<keyword id="KW-0699">rRNA-binding</keyword>
<feature type="chain" id="PRO_0000258133" description="Large ribosomal subunit protein uL11">
    <location>
        <begin position="1"/>
        <end position="141"/>
    </location>
</feature>
<dbReference type="EMBL" id="CP000025">
    <property type="protein sequence ID" value="AAW35111.1"/>
    <property type="molecule type" value="Genomic_DNA"/>
</dbReference>
<dbReference type="RefSeq" id="WP_002779452.1">
    <property type="nucleotide sequence ID" value="NC_003912.7"/>
</dbReference>
<dbReference type="SMR" id="Q5HVZ3"/>
<dbReference type="GeneID" id="66544517"/>
<dbReference type="KEGG" id="cjr:CJE0524"/>
<dbReference type="HOGENOM" id="CLU_074237_2_0_7"/>
<dbReference type="GO" id="GO:0022625">
    <property type="term" value="C:cytosolic large ribosomal subunit"/>
    <property type="evidence" value="ECO:0007669"/>
    <property type="project" value="TreeGrafter"/>
</dbReference>
<dbReference type="GO" id="GO:0070180">
    <property type="term" value="F:large ribosomal subunit rRNA binding"/>
    <property type="evidence" value="ECO:0007669"/>
    <property type="project" value="UniProtKB-UniRule"/>
</dbReference>
<dbReference type="GO" id="GO:0003735">
    <property type="term" value="F:structural constituent of ribosome"/>
    <property type="evidence" value="ECO:0007669"/>
    <property type="project" value="InterPro"/>
</dbReference>
<dbReference type="GO" id="GO:0006412">
    <property type="term" value="P:translation"/>
    <property type="evidence" value="ECO:0007669"/>
    <property type="project" value="UniProtKB-UniRule"/>
</dbReference>
<dbReference type="CDD" id="cd00349">
    <property type="entry name" value="Ribosomal_L11"/>
    <property type="match status" value="1"/>
</dbReference>
<dbReference type="FunFam" id="1.10.10.250:FF:000001">
    <property type="entry name" value="50S ribosomal protein L11"/>
    <property type="match status" value="1"/>
</dbReference>
<dbReference type="FunFam" id="3.30.1550.10:FF:000001">
    <property type="entry name" value="50S ribosomal protein L11"/>
    <property type="match status" value="1"/>
</dbReference>
<dbReference type="Gene3D" id="1.10.10.250">
    <property type="entry name" value="Ribosomal protein L11, C-terminal domain"/>
    <property type="match status" value="1"/>
</dbReference>
<dbReference type="Gene3D" id="3.30.1550.10">
    <property type="entry name" value="Ribosomal protein L11/L12, N-terminal domain"/>
    <property type="match status" value="1"/>
</dbReference>
<dbReference type="HAMAP" id="MF_00736">
    <property type="entry name" value="Ribosomal_uL11"/>
    <property type="match status" value="1"/>
</dbReference>
<dbReference type="InterPro" id="IPR000911">
    <property type="entry name" value="Ribosomal_uL11"/>
</dbReference>
<dbReference type="InterPro" id="IPR006519">
    <property type="entry name" value="Ribosomal_uL11_bac-typ"/>
</dbReference>
<dbReference type="InterPro" id="IPR020783">
    <property type="entry name" value="Ribosomal_uL11_C"/>
</dbReference>
<dbReference type="InterPro" id="IPR036769">
    <property type="entry name" value="Ribosomal_uL11_C_sf"/>
</dbReference>
<dbReference type="InterPro" id="IPR020785">
    <property type="entry name" value="Ribosomal_uL11_CS"/>
</dbReference>
<dbReference type="InterPro" id="IPR020784">
    <property type="entry name" value="Ribosomal_uL11_N"/>
</dbReference>
<dbReference type="InterPro" id="IPR036796">
    <property type="entry name" value="Ribosomal_uL11_N_sf"/>
</dbReference>
<dbReference type="NCBIfam" id="TIGR01632">
    <property type="entry name" value="L11_bact"/>
    <property type="match status" value="1"/>
</dbReference>
<dbReference type="PANTHER" id="PTHR11661">
    <property type="entry name" value="60S RIBOSOMAL PROTEIN L12"/>
    <property type="match status" value="1"/>
</dbReference>
<dbReference type="PANTHER" id="PTHR11661:SF1">
    <property type="entry name" value="LARGE RIBOSOMAL SUBUNIT PROTEIN UL11M"/>
    <property type="match status" value="1"/>
</dbReference>
<dbReference type="Pfam" id="PF00298">
    <property type="entry name" value="Ribosomal_L11"/>
    <property type="match status" value="1"/>
</dbReference>
<dbReference type="Pfam" id="PF03946">
    <property type="entry name" value="Ribosomal_L11_N"/>
    <property type="match status" value="1"/>
</dbReference>
<dbReference type="SMART" id="SM00649">
    <property type="entry name" value="RL11"/>
    <property type="match status" value="1"/>
</dbReference>
<dbReference type="SUPFAM" id="SSF54747">
    <property type="entry name" value="Ribosomal L11/L12e N-terminal domain"/>
    <property type="match status" value="1"/>
</dbReference>
<dbReference type="SUPFAM" id="SSF46906">
    <property type="entry name" value="Ribosomal protein L11, C-terminal domain"/>
    <property type="match status" value="1"/>
</dbReference>
<dbReference type="PROSITE" id="PS00359">
    <property type="entry name" value="RIBOSOMAL_L11"/>
    <property type="match status" value="1"/>
</dbReference>
<evidence type="ECO:0000255" key="1">
    <source>
        <dbReference type="HAMAP-Rule" id="MF_00736"/>
    </source>
</evidence>
<evidence type="ECO:0000305" key="2"/>
<reference key="1">
    <citation type="journal article" date="2005" name="PLoS Biol.">
        <title>Major structural differences and novel potential virulence mechanisms from the genomes of multiple Campylobacter species.</title>
        <authorList>
            <person name="Fouts D.E."/>
            <person name="Mongodin E.F."/>
            <person name="Mandrell R.E."/>
            <person name="Miller W.G."/>
            <person name="Rasko D.A."/>
            <person name="Ravel J."/>
            <person name="Brinkac L.M."/>
            <person name="DeBoy R.T."/>
            <person name="Parker C.T."/>
            <person name="Daugherty S.C."/>
            <person name="Dodson R.J."/>
            <person name="Durkin A.S."/>
            <person name="Madupu R."/>
            <person name="Sullivan S.A."/>
            <person name="Shetty J.U."/>
            <person name="Ayodeji M.A."/>
            <person name="Shvartsbeyn A."/>
            <person name="Schatz M.C."/>
            <person name="Badger J.H."/>
            <person name="Fraser C.M."/>
            <person name="Nelson K.E."/>
        </authorList>
    </citation>
    <scope>NUCLEOTIDE SEQUENCE [LARGE SCALE GENOMIC DNA]</scope>
    <source>
        <strain>RM1221</strain>
    </source>
</reference>
<protein>
    <recommendedName>
        <fullName evidence="1">Large ribosomal subunit protein uL11</fullName>
    </recommendedName>
    <alternativeName>
        <fullName evidence="2">50S ribosomal protein L11</fullName>
    </alternativeName>
</protein>
<comment type="function">
    <text evidence="1">Forms part of the ribosomal stalk which helps the ribosome interact with GTP-bound translation factors.</text>
</comment>
<comment type="subunit">
    <text evidence="1">Part of the ribosomal stalk of the 50S ribosomal subunit. Interacts with L10 and the large rRNA to form the base of the stalk. L10 forms an elongated spine to which L12 dimers bind in a sequential fashion forming a multimeric L10(L12)X complex.</text>
</comment>
<comment type="PTM">
    <text evidence="1">One or more lysine residues are methylated.</text>
</comment>
<comment type="similarity">
    <text evidence="1">Belongs to the universal ribosomal protein uL11 family.</text>
</comment>
<accession>Q5HVZ3</accession>
<organism>
    <name type="scientific">Campylobacter jejuni (strain RM1221)</name>
    <dbReference type="NCBI Taxonomy" id="195099"/>
    <lineage>
        <taxon>Bacteria</taxon>
        <taxon>Pseudomonadati</taxon>
        <taxon>Campylobacterota</taxon>
        <taxon>Epsilonproteobacteria</taxon>
        <taxon>Campylobacterales</taxon>
        <taxon>Campylobacteraceae</taxon>
        <taxon>Campylobacter</taxon>
    </lineage>
</organism>
<gene>
    <name evidence="1" type="primary">rplK</name>
    <name type="ordered locus">CJE0524</name>
</gene>
<sequence length="141" mass="15080">MAKKVVGEIKLQIAATKANPSPPVGPALGQQGVNIMEFCKAFNERTKDMAGFNIPVVITVYADKSFTFITKQPPATDLIKKAAGISKGTDNPLKNKVGKLTRAQVLEIVDKKIADLNTKDRDQAAKIIAGSARSMGVEIVD</sequence>
<name>RL11_CAMJR</name>
<proteinExistence type="inferred from homology"/>